<name>AROA_STRAW</name>
<feature type="chain" id="PRO_1000099754" description="3-phosphoshikimate 1-carboxyvinyltransferase">
    <location>
        <begin position="1"/>
        <end position="446"/>
    </location>
</feature>
<feature type="active site" description="Proton acceptor" evidence="1">
    <location>
        <position position="334"/>
    </location>
</feature>
<feature type="binding site" evidence="1">
    <location>
        <position position="30"/>
    </location>
    <ligand>
        <name>3-phosphoshikimate</name>
        <dbReference type="ChEBI" id="CHEBI:145989"/>
    </ligand>
</feature>
<feature type="binding site" evidence="1">
    <location>
        <position position="30"/>
    </location>
    <ligand>
        <name>phosphoenolpyruvate</name>
        <dbReference type="ChEBI" id="CHEBI:58702"/>
    </ligand>
</feature>
<feature type="binding site" evidence="1">
    <location>
        <position position="31"/>
    </location>
    <ligand>
        <name>3-phosphoshikimate</name>
        <dbReference type="ChEBI" id="CHEBI:145989"/>
    </ligand>
</feature>
<feature type="binding site" evidence="1">
    <location>
        <position position="35"/>
    </location>
    <ligand>
        <name>3-phosphoshikimate</name>
        <dbReference type="ChEBI" id="CHEBI:145989"/>
    </ligand>
</feature>
<feature type="binding site" evidence="1">
    <location>
        <position position="112"/>
    </location>
    <ligand>
        <name>phosphoenolpyruvate</name>
        <dbReference type="ChEBI" id="CHEBI:58702"/>
    </ligand>
</feature>
<feature type="binding site" evidence="1">
    <location>
        <position position="140"/>
    </location>
    <ligand>
        <name>phosphoenolpyruvate</name>
        <dbReference type="ChEBI" id="CHEBI:58702"/>
    </ligand>
</feature>
<feature type="binding site" evidence="1">
    <location>
        <position position="186"/>
    </location>
    <ligand>
        <name>3-phosphoshikimate</name>
        <dbReference type="ChEBI" id="CHEBI:145989"/>
    </ligand>
</feature>
<feature type="binding site" evidence="1">
    <location>
        <position position="187"/>
    </location>
    <ligand>
        <name>3-phosphoshikimate</name>
        <dbReference type="ChEBI" id="CHEBI:145989"/>
    </ligand>
</feature>
<feature type="binding site" evidence="1">
    <location>
        <position position="188"/>
    </location>
    <ligand>
        <name>3-phosphoshikimate</name>
        <dbReference type="ChEBI" id="CHEBI:145989"/>
    </ligand>
</feature>
<feature type="binding site" evidence="1">
    <location>
        <position position="188"/>
    </location>
    <ligand>
        <name>phosphoenolpyruvate</name>
        <dbReference type="ChEBI" id="CHEBI:58702"/>
    </ligand>
</feature>
<feature type="binding site" evidence="1">
    <location>
        <position position="215"/>
    </location>
    <ligand>
        <name>3-phosphoshikimate</name>
        <dbReference type="ChEBI" id="CHEBI:145989"/>
    </ligand>
</feature>
<feature type="binding site" evidence="1">
    <location>
        <position position="334"/>
    </location>
    <ligand>
        <name>3-phosphoshikimate</name>
        <dbReference type="ChEBI" id="CHEBI:145989"/>
    </ligand>
</feature>
<feature type="binding site" evidence="1">
    <location>
        <position position="361"/>
    </location>
    <ligand>
        <name>3-phosphoshikimate</name>
        <dbReference type="ChEBI" id="CHEBI:145989"/>
    </ligand>
</feature>
<feature type="binding site" evidence="1">
    <location>
        <position position="365"/>
    </location>
    <ligand>
        <name>phosphoenolpyruvate</name>
        <dbReference type="ChEBI" id="CHEBI:58702"/>
    </ligand>
</feature>
<feature type="binding site" evidence="1">
    <location>
        <position position="406"/>
    </location>
    <ligand>
        <name>phosphoenolpyruvate</name>
        <dbReference type="ChEBI" id="CHEBI:58702"/>
    </ligand>
</feature>
<feature type="binding site" evidence="1">
    <location>
        <position position="431"/>
    </location>
    <ligand>
        <name>phosphoenolpyruvate</name>
        <dbReference type="ChEBI" id="CHEBI:58702"/>
    </ligand>
</feature>
<gene>
    <name evidence="1" type="primary">aroA</name>
    <name type="synonym">sav3042</name>
    <name type="ordered locus">SAV_3042</name>
</gene>
<comment type="function">
    <text evidence="1">Catalyzes the transfer of the enolpyruvyl moiety of phosphoenolpyruvate (PEP) to the 5-hydroxyl of shikimate-3-phosphate (S3P) to produce enolpyruvyl shikimate-3-phosphate and inorganic phosphate.</text>
</comment>
<comment type="catalytic activity">
    <reaction evidence="1">
        <text>3-phosphoshikimate + phosphoenolpyruvate = 5-O-(1-carboxyvinyl)-3-phosphoshikimate + phosphate</text>
        <dbReference type="Rhea" id="RHEA:21256"/>
        <dbReference type="ChEBI" id="CHEBI:43474"/>
        <dbReference type="ChEBI" id="CHEBI:57701"/>
        <dbReference type="ChEBI" id="CHEBI:58702"/>
        <dbReference type="ChEBI" id="CHEBI:145989"/>
        <dbReference type="EC" id="2.5.1.19"/>
    </reaction>
    <physiologicalReaction direction="left-to-right" evidence="1">
        <dbReference type="Rhea" id="RHEA:21257"/>
    </physiologicalReaction>
</comment>
<comment type="pathway">
    <text evidence="1">Metabolic intermediate biosynthesis; chorismate biosynthesis; chorismate from D-erythrose 4-phosphate and phosphoenolpyruvate: step 6/7.</text>
</comment>
<comment type="subunit">
    <text evidence="1">Monomer.</text>
</comment>
<comment type="subcellular location">
    <subcellularLocation>
        <location evidence="1">Cytoplasm</location>
    </subcellularLocation>
</comment>
<comment type="similarity">
    <text evidence="1">Belongs to the EPSP synthase family.</text>
</comment>
<reference key="1">
    <citation type="journal article" date="2003" name="Nat. Biotechnol.">
        <title>Complete genome sequence and comparative analysis of the industrial microorganism Streptomyces avermitilis.</title>
        <authorList>
            <person name="Ikeda H."/>
            <person name="Ishikawa J."/>
            <person name="Hanamoto A."/>
            <person name="Shinose M."/>
            <person name="Kikuchi H."/>
            <person name="Shiba T."/>
            <person name="Sakaki Y."/>
            <person name="Hattori M."/>
            <person name="Omura S."/>
        </authorList>
    </citation>
    <scope>NUCLEOTIDE SEQUENCE [LARGE SCALE GENOMIC DNA]</scope>
    <source>
        <strain>ATCC 31267 / DSM 46492 / JCM 5070 / NBRC 14893 / NCIMB 12804 / NRRL 8165 / MA-4680</strain>
    </source>
</reference>
<reference key="2">
    <citation type="journal article" date="2001" name="Proc. Natl. Acad. Sci. U.S.A.">
        <title>Genome sequence of an industrial microorganism Streptomyces avermitilis: deducing the ability of producing secondary metabolites.</title>
        <authorList>
            <person name="Omura S."/>
            <person name="Ikeda H."/>
            <person name="Ishikawa J."/>
            <person name="Hanamoto A."/>
            <person name="Takahashi C."/>
            <person name="Shinose M."/>
            <person name="Takahashi Y."/>
            <person name="Horikawa H."/>
            <person name="Nakazawa H."/>
            <person name="Osonoe T."/>
            <person name="Kikuchi H."/>
            <person name="Shiba T."/>
            <person name="Sakaki Y."/>
            <person name="Hattori M."/>
        </authorList>
    </citation>
    <scope>NUCLEOTIDE SEQUENCE [LARGE SCALE GENOMIC DNA]</scope>
    <source>
        <strain>ATCC 31267 / DSM 46492 / JCM 5070 / NBRC 14893 / NCIMB 12804 / NRRL 8165 / MA-4680</strain>
    </source>
</reference>
<dbReference type="EC" id="2.5.1.19" evidence="1"/>
<dbReference type="EMBL" id="BA000030">
    <property type="protein sequence ID" value="BAC70753.1"/>
    <property type="molecule type" value="Genomic_DNA"/>
</dbReference>
<dbReference type="RefSeq" id="WP_010984472.1">
    <property type="nucleotide sequence ID" value="NZ_JZJK01000090.1"/>
</dbReference>
<dbReference type="SMR" id="Q82IU1"/>
<dbReference type="GeneID" id="41540123"/>
<dbReference type="KEGG" id="sma:SAVERM_3042"/>
<dbReference type="eggNOG" id="COG0128">
    <property type="taxonomic scope" value="Bacteria"/>
</dbReference>
<dbReference type="HOGENOM" id="CLU_024321_0_0_11"/>
<dbReference type="OrthoDB" id="9809920at2"/>
<dbReference type="UniPathway" id="UPA00053">
    <property type="reaction ID" value="UER00089"/>
</dbReference>
<dbReference type="Proteomes" id="UP000000428">
    <property type="component" value="Chromosome"/>
</dbReference>
<dbReference type="GO" id="GO:0005737">
    <property type="term" value="C:cytoplasm"/>
    <property type="evidence" value="ECO:0007669"/>
    <property type="project" value="UniProtKB-SubCell"/>
</dbReference>
<dbReference type="GO" id="GO:0003866">
    <property type="term" value="F:3-phosphoshikimate 1-carboxyvinyltransferase activity"/>
    <property type="evidence" value="ECO:0007669"/>
    <property type="project" value="UniProtKB-UniRule"/>
</dbReference>
<dbReference type="GO" id="GO:0008652">
    <property type="term" value="P:amino acid biosynthetic process"/>
    <property type="evidence" value="ECO:0007669"/>
    <property type="project" value="UniProtKB-KW"/>
</dbReference>
<dbReference type="GO" id="GO:0009073">
    <property type="term" value="P:aromatic amino acid family biosynthetic process"/>
    <property type="evidence" value="ECO:0007669"/>
    <property type="project" value="UniProtKB-KW"/>
</dbReference>
<dbReference type="GO" id="GO:0009423">
    <property type="term" value="P:chorismate biosynthetic process"/>
    <property type="evidence" value="ECO:0007669"/>
    <property type="project" value="UniProtKB-UniRule"/>
</dbReference>
<dbReference type="CDD" id="cd01556">
    <property type="entry name" value="EPSP_synthase"/>
    <property type="match status" value="1"/>
</dbReference>
<dbReference type="FunFam" id="3.65.10.10:FF:000010">
    <property type="entry name" value="3-phosphoshikimate 1-carboxyvinyltransferase"/>
    <property type="match status" value="1"/>
</dbReference>
<dbReference type="FunFam" id="3.65.10.10:FF:000011">
    <property type="entry name" value="3-phosphoshikimate 1-carboxyvinyltransferase"/>
    <property type="match status" value="1"/>
</dbReference>
<dbReference type="Gene3D" id="3.65.10.10">
    <property type="entry name" value="Enolpyruvate transferase domain"/>
    <property type="match status" value="2"/>
</dbReference>
<dbReference type="HAMAP" id="MF_00210">
    <property type="entry name" value="EPSP_synth"/>
    <property type="match status" value="1"/>
</dbReference>
<dbReference type="InterPro" id="IPR001986">
    <property type="entry name" value="Enolpyruvate_Tfrase_dom"/>
</dbReference>
<dbReference type="InterPro" id="IPR036968">
    <property type="entry name" value="Enolpyruvate_Tfrase_sf"/>
</dbReference>
<dbReference type="InterPro" id="IPR006264">
    <property type="entry name" value="EPSP_synthase"/>
</dbReference>
<dbReference type="InterPro" id="IPR023193">
    <property type="entry name" value="EPSP_synthase_CS"/>
</dbReference>
<dbReference type="InterPro" id="IPR013792">
    <property type="entry name" value="RNA3'P_cycl/enolpyr_Trfase_a/b"/>
</dbReference>
<dbReference type="NCBIfam" id="TIGR01356">
    <property type="entry name" value="aroA"/>
    <property type="match status" value="1"/>
</dbReference>
<dbReference type="PANTHER" id="PTHR21090">
    <property type="entry name" value="AROM/DEHYDROQUINATE SYNTHASE"/>
    <property type="match status" value="1"/>
</dbReference>
<dbReference type="PANTHER" id="PTHR21090:SF5">
    <property type="entry name" value="PENTAFUNCTIONAL AROM POLYPEPTIDE"/>
    <property type="match status" value="1"/>
</dbReference>
<dbReference type="Pfam" id="PF00275">
    <property type="entry name" value="EPSP_synthase"/>
    <property type="match status" value="1"/>
</dbReference>
<dbReference type="PIRSF" id="PIRSF000505">
    <property type="entry name" value="EPSPS"/>
    <property type="match status" value="1"/>
</dbReference>
<dbReference type="SUPFAM" id="SSF55205">
    <property type="entry name" value="EPT/RTPC-like"/>
    <property type="match status" value="1"/>
</dbReference>
<dbReference type="PROSITE" id="PS00104">
    <property type="entry name" value="EPSP_SYNTHASE_1"/>
    <property type="match status" value="1"/>
</dbReference>
<dbReference type="PROSITE" id="PS00885">
    <property type="entry name" value="EPSP_SYNTHASE_2"/>
    <property type="match status" value="1"/>
</dbReference>
<sequence length="446" mass="46247">MTVNPAHTALWPAPHASGAVDATVHVPGSKSVTNRALVLAALASEPGWLRRPLRSRDTLLMAAALREMGVGIEETVSSSSSVGGGSDGSGEAWRVIPAALHGPATVDVGNAGTVMRFLPPVAALADGPIRFDGDPRSYERPLNGVIDALRALGARIDDDGRGALPLTVHGGGALDGGPVAIDASSSSQFVSALLLSGPRFNQGVEVRHTGSTLPSMPHIRMTVDMLRAVGAQVDTPESGGEANVWRVTPGALLGRDLTVEPDLSNAQPFLAAALVTGGKVVIPDWPERTTQPGDKLREIFTEMGGSCELTEQGLEFTGSGAVHGIDVDLSEVGELTPGIAAVAALADSPSTLRGVAHLRLHETDRLAALTKEINELGGDVTETADGLSIRPRRLHGGIFHTYDDHRMATAGAIIGLAVDGVQIENVATTAKTLPDFPDLWTGMLGN</sequence>
<accession>Q82IU1</accession>
<keyword id="KW-0028">Amino-acid biosynthesis</keyword>
<keyword id="KW-0057">Aromatic amino acid biosynthesis</keyword>
<keyword id="KW-0963">Cytoplasm</keyword>
<keyword id="KW-1185">Reference proteome</keyword>
<keyword id="KW-0808">Transferase</keyword>
<proteinExistence type="inferred from homology"/>
<organism>
    <name type="scientific">Streptomyces avermitilis (strain ATCC 31267 / DSM 46492 / JCM 5070 / NBRC 14893 / NCIMB 12804 / NRRL 8165 / MA-4680)</name>
    <dbReference type="NCBI Taxonomy" id="227882"/>
    <lineage>
        <taxon>Bacteria</taxon>
        <taxon>Bacillati</taxon>
        <taxon>Actinomycetota</taxon>
        <taxon>Actinomycetes</taxon>
        <taxon>Kitasatosporales</taxon>
        <taxon>Streptomycetaceae</taxon>
        <taxon>Streptomyces</taxon>
    </lineage>
</organism>
<protein>
    <recommendedName>
        <fullName evidence="1">3-phosphoshikimate 1-carboxyvinyltransferase</fullName>
        <ecNumber evidence="1">2.5.1.19</ecNumber>
    </recommendedName>
    <alternativeName>
        <fullName evidence="1">5-enolpyruvylshikimate-3-phosphate synthase</fullName>
        <shortName evidence="1">EPSP synthase</shortName>
        <shortName evidence="1">EPSPS</shortName>
    </alternativeName>
</protein>
<evidence type="ECO:0000255" key="1">
    <source>
        <dbReference type="HAMAP-Rule" id="MF_00210"/>
    </source>
</evidence>